<accession>Q751U7</accession>
<protein>
    <recommendedName>
        <fullName evidence="3">Outer kinetochore KNL1 complex subunit KRE28</fullName>
    </recommendedName>
    <alternativeName>
        <fullName>Spindle pole body component KRE28</fullName>
    </alternativeName>
</protein>
<evidence type="ECO:0000250" key="1">
    <source>
        <dbReference type="UniProtKB" id="Q04431"/>
    </source>
</evidence>
<evidence type="ECO:0000255" key="2"/>
<evidence type="ECO:0000305" key="3"/>
<sequence>MSTKDTSGQSGYANDIRKLGEQTAHVSEQVLVQQERQRLGALEELHQSIIQIAEENSFVTPIKKDAANVHIDPRGIAVSVQQFKQLAEVLKVTHLEQETLDNFLRYTISDNDQLLDIKSVADSRYARLAEEVCQLEQEELRHLENEIISLNGNITEQTTKVIDANEKVKEECLEVSNGIERCWGLLNELETLRSTTDEGNVELGPLEETYQKWKSVDHFLQQKLHLKEQLRVLEDTRKSLSEVTKSSGNRAPDLDASEKFVTYRLLDSMWKKQFVDTTKIRDLELYPRTGKIQFQVADTIYVLAISGDQISNIQLFNDKLPAADLENNTQDLNKRFLGTSDVRRVVDFITHQQAVPQAQVH</sequence>
<organism>
    <name type="scientific">Eremothecium gossypii (strain ATCC 10895 / CBS 109.51 / FGSC 9923 / NRRL Y-1056)</name>
    <name type="common">Yeast</name>
    <name type="synonym">Ashbya gossypii</name>
    <dbReference type="NCBI Taxonomy" id="284811"/>
    <lineage>
        <taxon>Eukaryota</taxon>
        <taxon>Fungi</taxon>
        <taxon>Dikarya</taxon>
        <taxon>Ascomycota</taxon>
        <taxon>Saccharomycotina</taxon>
        <taxon>Saccharomycetes</taxon>
        <taxon>Saccharomycetales</taxon>
        <taxon>Saccharomycetaceae</taxon>
        <taxon>Eremothecium</taxon>
    </lineage>
</organism>
<dbReference type="EMBL" id="AE016819">
    <property type="protein sequence ID" value="AAS54100.2"/>
    <property type="molecule type" value="Genomic_DNA"/>
</dbReference>
<dbReference type="RefSeq" id="NP_986276.2">
    <property type="nucleotide sequence ID" value="NM_212412.2"/>
</dbReference>
<dbReference type="SMR" id="Q751U7"/>
<dbReference type="FunCoup" id="Q751U7">
    <property type="interactions" value="29"/>
</dbReference>
<dbReference type="STRING" id="284811.Q751U7"/>
<dbReference type="EnsemblFungi" id="AAS54100">
    <property type="protein sequence ID" value="AAS54100"/>
    <property type="gene ID" value="AGOS_AFR728W"/>
</dbReference>
<dbReference type="GeneID" id="4622567"/>
<dbReference type="KEGG" id="ago:AGOS_AFR728W"/>
<dbReference type="eggNOG" id="ENOG502S19U">
    <property type="taxonomic scope" value="Eukaryota"/>
</dbReference>
<dbReference type="HOGENOM" id="CLU_062083_0_0_1"/>
<dbReference type="InParanoid" id="Q751U7"/>
<dbReference type="OMA" id="GNEIDEC"/>
<dbReference type="OrthoDB" id="4065660at2759"/>
<dbReference type="Proteomes" id="UP000000591">
    <property type="component" value="Chromosome VI"/>
</dbReference>
<dbReference type="GO" id="GO:0000776">
    <property type="term" value="C:kinetochore"/>
    <property type="evidence" value="ECO:0000250"/>
    <property type="project" value="UniProtKB"/>
</dbReference>
<dbReference type="GO" id="GO:0180019">
    <property type="term" value="C:Knl1/Spc105 complex"/>
    <property type="evidence" value="ECO:0000250"/>
    <property type="project" value="UniProtKB"/>
</dbReference>
<dbReference type="GO" id="GO:0005634">
    <property type="term" value="C:nucleus"/>
    <property type="evidence" value="ECO:0007669"/>
    <property type="project" value="UniProtKB-SubCell"/>
</dbReference>
<dbReference type="GO" id="GO:0031619">
    <property type="term" value="P:homologous chromosome orientation in meiotic metaphase I"/>
    <property type="evidence" value="ECO:0000250"/>
    <property type="project" value="UniProtKB"/>
</dbReference>
<dbReference type="GO" id="GO:1905325">
    <property type="term" value="P:regulation of meiosis I spindle assembly checkpoint"/>
    <property type="evidence" value="ECO:0000250"/>
    <property type="project" value="UniProtKB"/>
</dbReference>
<dbReference type="InterPro" id="IPR031361">
    <property type="entry name" value="Kre28"/>
</dbReference>
<dbReference type="Pfam" id="PF17097">
    <property type="entry name" value="Kre28"/>
    <property type="match status" value="1"/>
</dbReference>
<name>ZWINT_EREGS</name>
<comment type="function">
    <text evidence="1">Acts as a component of the outer kinetochore KNL1 complex that facilitates microtubule-kinetochore interactions and the spindle assembly checkpoint. Kinetochores, consisting of a centromere-associated inner segment and a microtubule-contacting outer segment, play a crucial role in chromosome segregation by mediating the physical connection between centromeric DNA and spindle microtubules. The outer kinetochore is made up of the ten-subunit KMN network, comprising the MIS12, NDC80 and KNL1 complexes, and auxiliary microtubule-associated components; together they connect the outer kinetochore with the inner kinetochore, bind microtubules, and mediate interactions with mitotic checkpoint proteins that delay anaphase until chromosomes are bioriented on the spindle.</text>
</comment>
<comment type="subunit">
    <text evidence="1">Component of the KNL1/SPC105 complex composed of SPC105 and KRE28. Part of the ten-subunit outer kinetochore KMN network that includes the KNL1, MIS12 and NDC80 complexes.</text>
</comment>
<comment type="subcellular location">
    <subcellularLocation>
        <location evidence="1">Nucleus</location>
    </subcellularLocation>
    <subcellularLocation>
        <location evidence="1">Chromosome</location>
        <location evidence="1">Centromere</location>
        <location evidence="1">Kinetochore</location>
    </subcellularLocation>
</comment>
<comment type="similarity">
    <text evidence="3">Belongs to the KRE28 family.</text>
</comment>
<gene>
    <name type="primary">KRE28</name>
    <name type="ordered locus">AFR728W</name>
</gene>
<keyword id="KW-0137">Centromere</keyword>
<keyword id="KW-0158">Chromosome</keyword>
<keyword id="KW-0175">Coiled coil</keyword>
<keyword id="KW-0995">Kinetochore</keyword>
<keyword id="KW-0539">Nucleus</keyword>
<keyword id="KW-1185">Reference proteome</keyword>
<feature type="chain" id="PRO_0000408560" description="Outer kinetochore KNL1 complex subunit KRE28">
    <location>
        <begin position="1"/>
        <end position="361"/>
    </location>
</feature>
<feature type="coiled-coil region" evidence="2">
    <location>
        <begin position="126"/>
        <end position="160"/>
    </location>
</feature>
<feature type="coiled-coil region" evidence="2">
    <location>
        <begin position="220"/>
        <end position="246"/>
    </location>
</feature>
<proteinExistence type="inferred from homology"/>
<reference key="1">
    <citation type="journal article" date="2004" name="Science">
        <title>The Ashbya gossypii genome as a tool for mapping the ancient Saccharomyces cerevisiae genome.</title>
        <authorList>
            <person name="Dietrich F.S."/>
            <person name="Voegeli S."/>
            <person name="Brachat S."/>
            <person name="Lerch A."/>
            <person name="Gates K."/>
            <person name="Steiner S."/>
            <person name="Mohr C."/>
            <person name="Poehlmann R."/>
            <person name="Luedi P."/>
            <person name="Choi S."/>
            <person name="Wing R.A."/>
            <person name="Flavier A."/>
            <person name="Gaffney T.D."/>
            <person name="Philippsen P."/>
        </authorList>
    </citation>
    <scope>NUCLEOTIDE SEQUENCE [LARGE SCALE GENOMIC DNA]</scope>
    <source>
        <strain>ATCC 10895 / CBS 109.51 / FGSC 9923 / NRRL Y-1056</strain>
    </source>
</reference>
<reference key="2">
    <citation type="journal article" date="2013" name="G3 (Bethesda)">
        <title>Genomes of Ashbya fungi isolated from insects reveal four mating-type loci, numerous translocations, lack of transposons, and distinct gene duplications.</title>
        <authorList>
            <person name="Dietrich F.S."/>
            <person name="Voegeli S."/>
            <person name="Kuo S."/>
            <person name="Philippsen P."/>
        </authorList>
    </citation>
    <scope>GENOME REANNOTATION</scope>
    <source>
        <strain>ATCC 10895 / CBS 109.51 / FGSC 9923 / NRRL Y-1056</strain>
    </source>
</reference>